<reference key="1">
    <citation type="journal article" date="2004" name="Nature">
        <title>Genome evolution in yeasts.</title>
        <authorList>
            <person name="Dujon B."/>
            <person name="Sherman D."/>
            <person name="Fischer G."/>
            <person name="Durrens P."/>
            <person name="Casaregola S."/>
            <person name="Lafontaine I."/>
            <person name="de Montigny J."/>
            <person name="Marck C."/>
            <person name="Neuveglise C."/>
            <person name="Talla E."/>
            <person name="Goffard N."/>
            <person name="Frangeul L."/>
            <person name="Aigle M."/>
            <person name="Anthouard V."/>
            <person name="Babour A."/>
            <person name="Barbe V."/>
            <person name="Barnay S."/>
            <person name="Blanchin S."/>
            <person name="Beckerich J.-M."/>
            <person name="Beyne E."/>
            <person name="Bleykasten C."/>
            <person name="Boisrame A."/>
            <person name="Boyer J."/>
            <person name="Cattolico L."/>
            <person name="Confanioleri F."/>
            <person name="de Daruvar A."/>
            <person name="Despons L."/>
            <person name="Fabre E."/>
            <person name="Fairhead C."/>
            <person name="Ferry-Dumazet H."/>
            <person name="Groppi A."/>
            <person name="Hantraye F."/>
            <person name="Hennequin C."/>
            <person name="Jauniaux N."/>
            <person name="Joyet P."/>
            <person name="Kachouri R."/>
            <person name="Kerrest A."/>
            <person name="Koszul R."/>
            <person name="Lemaire M."/>
            <person name="Lesur I."/>
            <person name="Ma L."/>
            <person name="Muller H."/>
            <person name="Nicaud J.-M."/>
            <person name="Nikolski M."/>
            <person name="Oztas S."/>
            <person name="Ozier-Kalogeropoulos O."/>
            <person name="Pellenz S."/>
            <person name="Potier S."/>
            <person name="Richard G.-F."/>
            <person name="Straub M.-L."/>
            <person name="Suleau A."/>
            <person name="Swennen D."/>
            <person name="Tekaia F."/>
            <person name="Wesolowski-Louvel M."/>
            <person name="Westhof E."/>
            <person name="Wirth B."/>
            <person name="Zeniou-Meyer M."/>
            <person name="Zivanovic Y."/>
            <person name="Bolotin-Fukuhara M."/>
            <person name="Thierry A."/>
            <person name="Bouchier C."/>
            <person name="Caudron B."/>
            <person name="Scarpelli C."/>
            <person name="Gaillardin C."/>
            <person name="Weissenbach J."/>
            <person name="Wincker P."/>
            <person name="Souciet J.-L."/>
        </authorList>
    </citation>
    <scope>NUCLEOTIDE SEQUENCE [LARGE SCALE GENOMIC DNA]</scope>
    <source>
        <strain>ATCC 8585 / CBS 2359 / DSM 70799 / NBRC 1267 / NRRL Y-1140 / WM37</strain>
    </source>
</reference>
<protein>
    <recommendedName>
        <fullName>Calpain-like protease palB/RIM13</fullName>
        <ecNumber>3.4.22.-</ecNumber>
    </recommendedName>
    <alternativeName>
        <fullName>Cysteine protease RIM13</fullName>
    </alternativeName>
</protein>
<proteinExistence type="inferred from homology"/>
<dbReference type="EC" id="3.4.22.-"/>
<dbReference type="EMBL" id="CR382126">
    <property type="protein sequence ID" value="CAG98114.1"/>
    <property type="molecule type" value="Genomic_DNA"/>
</dbReference>
<dbReference type="RefSeq" id="XP_455406.1">
    <property type="nucleotide sequence ID" value="XM_455406.1"/>
</dbReference>
<dbReference type="SMR" id="Q6CKY3"/>
<dbReference type="FunCoup" id="Q6CKY3">
    <property type="interactions" value="35"/>
</dbReference>
<dbReference type="STRING" id="284590.Q6CKY3"/>
<dbReference type="PaxDb" id="284590-Q6CKY3"/>
<dbReference type="KEGG" id="kla:KLLA0_F07183g"/>
<dbReference type="eggNOG" id="KOG0045">
    <property type="taxonomic scope" value="Eukaryota"/>
</dbReference>
<dbReference type="HOGENOM" id="CLU_023416_0_0_1"/>
<dbReference type="InParanoid" id="Q6CKY3"/>
<dbReference type="OMA" id="GWLPQII"/>
<dbReference type="Proteomes" id="UP000000598">
    <property type="component" value="Chromosome F"/>
</dbReference>
<dbReference type="GO" id="GO:0004197">
    <property type="term" value="F:cysteine-type endopeptidase activity"/>
    <property type="evidence" value="ECO:0007669"/>
    <property type="project" value="TreeGrafter"/>
</dbReference>
<dbReference type="GO" id="GO:0006508">
    <property type="term" value="P:proteolysis"/>
    <property type="evidence" value="ECO:0007669"/>
    <property type="project" value="UniProtKB-KW"/>
</dbReference>
<dbReference type="InterPro" id="IPR051297">
    <property type="entry name" value="PalB/RIM13_Calpain-like"/>
</dbReference>
<dbReference type="InterPro" id="IPR038765">
    <property type="entry name" value="Papain-like_cys_pep_sf"/>
</dbReference>
<dbReference type="PANTHER" id="PTHR46143">
    <property type="entry name" value="CALPAIN-7"/>
    <property type="match status" value="1"/>
</dbReference>
<dbReference type="PANTHER" id="PTHR46143:SF1">
    <property type="entry name" value="CALPAIN-7"/>
    <property type="match status" value="1"/>
</dbReference>
<dbReference type="SUPFAM" id="SSF54001">
    <property type="entry name" value="Cysteine proteinases"/>
    <property type="match status" value="1"/>
</dbReference>
<accession>Q6CKY3</accession>
<keyword id="KW-0378">Hydrolase</keyword>
<keyword id="KW-0645">Protease</keyword>
<keyword id="KW-1185">Reference proteome</keyword>
<keyword id="KW-0788">Thiol protease</keyword>
<feature type="chain" id="PRO_0000207743" description="Calpain-like protease palB/RIM13">
    <location>
        <begin position="1"/>
        <end position="685"/>
    </location>
</feature>
<feature type="domain" description="Calpain catalytic">
    <location>
        <begin position="82"/>
        <end position="323"/>
    </location>
</feature>
<feature type="active site" evidence="1">
    <location>
        <position position="139"/>
    </location>
</feature>
<feature type="active site" evidence="1">
    <location>
        <position position="277"/>
    </location>
</feature>
<feature type="active site" evidence="1">
    <location>
        <position position="295"/>
    </location>
</feature>
<gene>
    <name type="primary">RIM13</name>
    <name type="ordered locus">KLLA0F07183g</name>
</gene>
<evidence type="ECO:0000250" key="1"/>
<evidence type="ECO:0000305" key="2"/>
<comment type="function">
    <text evidence="1">Required for the proteolytic cleavage of the transcription factor RIM101 in response to alkaline ambient pH.</text>
</comment>
<comment type="similarity">
    <text evidence="2">Belongs to the peptidase C2 family. PalB/RIM13 subfamily.</text>
</comment>
<sequence length="685" mass="79686">MPRGAQAMLEKQADSVWNQLYEICWNFYVKNVWDINTFKAIVDKIEKSDDKQLIRFLIWFNDARKRSNFNDKFQWMTSFLYGRRYPPLGDDLVVKEPWNDLQQLDSIIKYGNEPIDLVKMQPDFTTEERIVQNRRVNNCSLICSLTNAREENQIKSYSVHNVFNVILHFNGSNRLVSVLRDSNFPKCSKDGAALTLFSHNIEDMLIELAYFEIKNNRNYAYGGSNTATDTYLLTGWIPEILNLGDVSFSEIRKCYQFNAMLALGTDSVKGKEVTENHDFVVTSVNWKKEQFTILNPHGTENPTVYTWDDLIKEFKWLYVNWDPYSKYTQRVKLHDRYPDKFNAYPTWTQKPLMCIENKSNSIQNCHLYLERHLLDDSILESNLTIGEIPRSGFTAVSAEGNNSGFCNMQLRLNPHETRLIFYHSDKKCNLTFHLLSNSGLVSMSKCKSDILTAESSWNITNNQWTIGTSEYFKSPVFKLKSDGFDDTYLDFELVSQLPAKVNFQIFESDDYALQRPIFKNDTYSPQIFSKHGVRLLKGREYFIVCSIAHHITSPFIFTLRNPETKQSKFELSPYSLGFGGLRYNEVLRCKTRITISVSNFTRLFVLLFTSASKTNGRLTLRLYEKETEEILFEQIETRYDLSVKPFPIPNIELKPASYVLEIFYNADVVICNLGTSHRAIFESDL</sequence>
<organism>
    <name type="scientific">Kluyveromyces lactis (strain ATCC 8585 / CBS 2359 / DSM 70799 / NBRC 1267 / NRRL Y-1140 / WM37)</name>
    <name type="common">Yeast</name>
    <name type="synonym">Candida sphaerica</name>
    <dbReference type="NCBI Taxonomy" id="284590"/>
    <lineage>
        <taxon>Eukaryota</taxon>
        <taxon>Fungi</taxon>
        <taxon>Dikarya</taxon>
        <taxon>Ascomycota</taxon>
        <taxon>Saccharomycotina</taxon>
        <taxon>Saccharomycetes</taxon>
        <taxon>Saccharomycetales</taxon>
        <taxon>Saccharomycetaceae</taxon>
        <taxon>Kluyveromyces</taxon>
    </lineage>
</organism>
<name>PALB_KLULA</name>